<name>WZYE_SERP5</name>
<keyword id="KW-0997">Cell inner membrane</keyword>
<keyword id="KW-1003">Cell membrane</keyword>
<keyword id="KW-0472">Membrane</keyword>
<keyword id="KW-0812">Transmembrane</keyword>
<keyword id="KW-1133">Transmembrane helix</keyword>
<sequence length="458" mass="52246">MTLAQFGGLFVVYLIGTLFVLTLTYQEFRRVRFNFNVFFSLLYLLTFYFGFPLTCLLVFQFDVEVVPVEFLLYAILSATAFYAIYYVSYKTRLRKRSVQPRKAVFSMNRVETHLTWILLALVAIVTVGIFFLQNGFLLFKLNSYSQIFSSDVSGVALKRFFYFFIPAMLVVYFLKQDLRAWFFFLAATVAFGILTYVIVGGTRANIIIAFSLFLFIGIVRGWISLWMLVAAGVFGIVGMFWLALKRYSLDVSGPEAFYTFLYLTRDTFSPWENLALLLQNYDKIDFQGLAPIVRDFYVFIPSWLWPGRPDTVLNTANYFTWEVLDNHSGLAISPTLIGSLVVMGGALFIPVGAVLVGMIIKWFDWLYEMGKSESNRYKAAILQGFCFGAVFNIIVLAREGVDSFVSRVVFFCLIFGVCLLMAKLLYWLFDTAGLIKARVQRSRTLTPPASSVRADGLL</sequence>
<organism>
    <name type="scientific">Serratia proteamaculans (strain 568)</name>
    <dbReference type="NCBI Taxonomy" id="399741"/>
    <lineage>
        <taxon>Bacteria</taxon>
        <taxon>Pseudomonadati</taxon>
        <taxon>Pseudomonadota</taxon>
        <taxon>Gammaproteobacteria</taxon>
        <taxon>Enterobacterales</taxon>
        <taxon>Yersiniaceae</taxon>
        <taxon>Serratia</taxon>
    </lineage>
</organism>
<gene>
    <name evidence="1" type="primary">wzyE</name>
    <name type="ordered locus">Spro_0171</name>
</gene>
<dbReference type="EMBL" id="CP000826">
    <property type="protein sequence ID" value="ABV39281.1"/>
    <property type="molecule type" value="Genomic_DNA"/>
</dbReference>
<dbReference type="STRING" id="399741.Spro_0171"/>
<dbReference type="KEGG" id="spe:Spro_0171"/>
<dbReference type="eggNOG" id="ENOG502Z7MA">
    <property type="taxonomic scope" value="Bacteria"/>
</dbReference>
<dbReference type="HOGENOM" id="CLU_049711_0_0_6"/>
<dbReference type="OrthoDB" id="6415259at2"/>
<dbReference type="UniPathway" id="UPA00566"/>
<dbReference type="GO" id="GO:0005886">
    <property type="term" value="C:plasma membrane"/>
    <property type="evidence" value="ECO:0007669"/>
    <property type="project" value="UniProtKB-SubCell"/>
</dbReference>
<dbReference type="GO" id="GO:0009246">
    <property type="term" value="P:enterobacterial common antigen biosynthetic process"/>
    <property type="evidence" value="ECO:0007669"/>
    <property type="project" value="UniProtKB-UniRule"/>
</dbReference>
<dbReference type="HAMAP" id="MF_01003">
    <property type="entry name" value="WzyE"/>
    <property type="match status" value="1"/>
</dbReference>
<dbReference type="InterPro" id="IPR010691">
    <property type="entry name" value="WzyE"/>
</dbReference>
<dbReference type="NCBIfam" id="NF002820">
    <property type="entry name" value="PRK02975.1"/>
    <property type="match status" value="1"/>
</dbReference>
<dbReference type="Pfam" id="PF06899">
    <property type="entry name" value="WzyE"/>
    <property type="match status" value="1"/>
</dbReference>
<feature type="chain" id="PRO_1000062762" description="Probable ECA polymerase">
    <location>
        <begin position="1"/>
        <end position="458"/>
    </location>
</feature>
<feature type="transmembrane region" description="Helical" evidence="1">
    <location>
        <begin position="3"/>
        <end position="23"/>
    </location>
</feature>
<feature type="transmembrane region" description="Helical" evidence="1">
    <location>
        <begin position="37"/>
        <end position="57"/>
    </location>
</feature>
<feature type="transmembrane region" description="Helical" evidence="1">
    <location>
        <begin position="65"/>
        <end position="85"/>
    </location>
</feature>
<feature type="transmembrane region" description="Helical" evidence="1">
    <location>
        <begin position="112"/>
        <end position="132"/>
    </location>
</feature>
<feature type="transmembrane region" description="Helical" evidence="1">
    <location>
        <begin position="154"/>
        <end position="174"/>
    </location>
</feature>
<feature type="transmembrane region" description="Helical" evidence="1">
    <location>
        <begin position="180"/>
        <end position="200"/>
    </location>
</feature>
<feature type="transmembrane region" description="Helical" evidence="1">
    <location>
        <begin position="201"/>
        <end position="221"/>
    </location>
</feature>
<feature type="transmembrane region" description="Helical" evidence="1">
    <location>
        <begin position="222"/>
        <end position="242"/>
    </location>
</feature>
<feature type="transmembrane region" description="Helical" evidence="1">
    <location>
        <begin position="340"/>
        <end position="360"/>
    </location>
</feature>
<feature type="transmembrane region" description="Helical" evidence="1">
    <location>
        <begin position="377"/>
        <end position="397"/>
    </location>
</feature>
<feature type="transmembrane region" description="Helical" evidence="1">
    <location>
        <begin position="409"/>
        <end position="429"/>
    </location>
</feature>
<protein>
    <recommendedName>
        <fullName evidence="1">Probable ECA polymerase</fullName>
    </recommendedName>
</protein>
<evidence type="ECO:0000255" key="1">
    <source>
        <dbReference type="HAMAP-Rule" id="MF_01003"/>
    </source>
</evidence>
<proteinExistence type="inferred from homology"/>
<reference key="1">
    <citation type="submission" date="2007-09" db="EMBL/GenBank/DDBJ databases">
        <title>Complete sequence of chromosome of Serratia proteamaculans 568.</title>
        <authorList>
            <consortium name="US DOE Joint Genome Institute"/>
            <person name="Copeland A."/>
            <person name="Lucas S."/>
            <person name="Lapidus A."/>
            <person name="Barry K."/>
            <person name="Glavina del Rio T."/>
            <person name="Dalin E."/>
            <person name="Tice H."/>
            <person name="Pitluck S."/>
            <person name="Chain P."/>
            <person name="Malfatti S."/>
            <person name="Shin M."/>
            <person name="Vergez L."/>
            <person name="Schmutz J."/>
            <person name="Larimer F."/>
            <person name="Land M."/>
            <person name="Hauser L."/>
            <person name="Kyrpides N."/>
            <person name="Kim E."/>
            <person name="Taghavi S."/>
            <person name="Newman L."/>
            <person name="Vangronsveld J."/>
            <person name="van der Lelie D."/>
            <person name="Richardson P."/>
        </authorList>
    </citation>
    <scope>NUCLEOTIDE SEQUENCE [LARGE SCALE GENOMIC DNA]</scope>
    <source>
        <strain>568</strain>
    </source>
</reference>
<comment type="function">
    <text evidence="1">Probably involved in the polymerization of enterobacterial common antigen (ECA) trisaccharide repeat units.</text>
</comment>
<comment type="pathway">
    <text evidence="1">Bacterial outer membrane biogenesis; enterobacterial common antigen biosynthesis.</text>
</comment>
<comment type="subunit">
    <text evidence="1">Probably part of a complex composed of WzxE, WzyE and WzzE.</text>
</comment>
<comment type="subcellular location">
    <subcellularLocation>
        <location evidence="1">Cell inner membrane</location>
        <topology evidence="1">Multi-pass membrane protein</topology>
    </subcellularLocation>
</comment>
<comment type="similarity">
    <text evidence="1">Belongs to the WzyE family.</text>
</comment>
<accession>A8G841</accession>